<gene>
    <name type="primary">PAS2</name>
    <name type="synonym">PEP</name>
    <name type="ordered locus">At5g10480</name>
    <name type="ORF">F12B17.170</name>
</gene>
<feature type="chain" id="PRO_0000372480" description="Very-long-chain (3R)-3-hydroxyacyl-CoA dehydratase PASTICCINO 2">
    <location>
        <begin position="1"/>
        <end position="221"/>
    </location>
</feature>
<feature type="topological domain" description="Cytoplasmic" evidence="2">
    <location>
        <begin position="1"/>
        <end position="11"/>
    </location>
</feature>
<feature type="transmembrane region" description="Helical" evidence="2">
    <location>
        <begin position="12"/>
        <end position="32"/>
    </location>
</feature>
<feature type="topological domain" description="Lumenal" evidence="2">
    <location>
        <begin position="33"/>
        <end position="51"/>
    </location>
</feature>
<feature type="transmembrane region" description="Helical" evidence="2">
    <location>
        <begin position="52"/>
        <end position="70"/>
    </location>
</feature>
<feature type="topological domain" description="Cytoplasmic" evidence="2">
    <location>
        <begin position="71"/>
        <end position="76"/>
    </location>
</feature>
<feature type="transmembrane region" description="Helical" evidence="2">
    <location>
        <begin position="77"/>
        <end position="95"/>
    </location>
</feature>
<feature type="topological domain" description="Lumenal" evidence="2">
    <location>
        <begin position="96"/>
        <end position="100"/>
    </location>
</feature>
<feature type="transmembrane region" description="Helical" evidence="2">
    <location>
        <begin position="101"/>
        <end position="122"/>
    </location>
</feature>
<feature type="topological domain" description="Cytoplasmic" evidence="2">
    <location>
        <begin position="123"/>
        <end position="142"/>
    </location>
</feature>
<feature type="transmembrane region" description="Helical" evidence="2">
    <location>
        <begin position="143"/>
        <end position="165"/>
    </location>
</feature>
<feature type="topological domain" description="Lumenal" evidence="2">
    <location>
        <begin position="166"/>
        <end position="184"/>
    </location>
</feature>
<feature type="transmembrane region" description="Helical" evidence="2">
    <location>
        <begin position="185"/>
        <end position="204"/>
    </location>
</feature>
<feature type="topological domain" description="Cytoplasmic" evidence="2">
    <location>
        <begin position="205"/>
        <end position="221"/>
    </location>
</feature>
<feature type="active site" evidence="1">
    <location>
        <position position="147"/>
    </location>
</feature>
<feature type="active site" evidence="1">
    <location>
        <position position="154"/>
    </location>
</feature>
<feature type="splice variant" id="VSP_037155" description="In isoform 2." evidence="9">
    <location>
        <begin position="1"/>
        <end position="25"/>
    </location>
</feature>
<feature type="splice variant" id="VSP_037156" description="In isoform 2." evidence="9">
    <original>Q</original>
    <variation>M</variation>
    <location>
        <position position="26"/>
    </location>
</feature>
<feature type="mutagenesis site" description="Loss of proliferation control." evidence="3">
    <original>S</original>
    <variation>F</variation>
    <location>
        <position position="72"/>
    </location>
</feature>
<dbReference type="EC" id="4.2.1.134" evidence="11"/>
<dbReference type="EMBL" id="AY047708">
    <property type="protein sequence ID" value="AAL05403.1"/>
    <property type="molecule type" value="mRNA"/>
</dbReference>
<dbReference type="EMBL" id="AJ506746">
    <property type="protein sequence ID" value="CAD45041.1"/>
    <property type="molecule type" value="mRNA"/>
</dbReference>
<dbReference type="EMBL" id="AL353995">
    <property type="protein sequence ID" value="CAB89395.1"/>
    <property type="status" value="ALT_SEQ"/>
    <property type="molecule type" value="Genomic_DNA"/>
</dbReference>
<dbReference type="EMBL" id="CP002688">
    <property type="protein sequence ID" value="AED91548.1"/>
    <property type="molecule type" value="Genomic_DNA"/>
</dbReference>
<dbReference type="EMBL" id="CP002688">
    <property type="protein sequence ID" value="AED91549.1"/>
    <property type="molecule type" value="Genomic_DNA"/>
</dbReference>
<dbReference type="EMBL" id="AY065090">
    <property type="protein sequence ID" value="AAL38266.1"/>
    <property type="molecule type" value="mRNA"/>
</dbReference>
<dbReference type="EMBL" id="BT006269">
    <property type="protein sequence ID" value="AAP13377.1"/>
    <property type="molecule type" value="mRNA"/>
</dbReference>
<dbReference type="PIR" id="T49991">
    <property type="entry name" value="T49991"/>
</dbReference>
<dbReference type="RefSeq" id="NP_001078566.1">
    <molecule id="Q8VZB2-2"/>
    <property type="nucleotide sequence ID" value="NM_001085097.1"/>
</dbReference>
<dbReference type="RefSeq" id="NP_196610.2">
    <molecule id="Q8VZB2-1"/>
    <property type="nucleotide sequence ID" value="NM_121086.5"/>
</dbReference>
<dbReference type="BioGRID" id="16190">
    <property type="interactions" value="11"/>
</dbReference>
<dbReference type="FunCoup" id="Q8VZB2">
    <property type="interactions" value="2733"/>
</dbReference>
<dbReference type="STRING" id="3702.Q8VZB2"/>
<dbReference type="PaxDb" id="3702-AT5G10480.3"/>
<dbReference type="ProteomicsDB" id="247215">
    <molecule id="Q8VZB2-1"/>
</dbReference>
<dbReference type="EnsemblPlants" id="AT5G10480.1">
    <molecule id="Q8VZB2-1"/>
    <property type="protein sequence ID" value="AT5G10480.1"/>
    <property type="gene ID" value="AT5G10480"/>
</dbReference>
<dbReference type="EnsemblPlants" id="AT5G10480.2">
    <molecule id="Q8VZB2-2"/>
    <property type="protein sequence ID" value="AT5G10480.2"/>
    <property type="gene ID" value="AT5G10480"/>
</dbReference>
<dbReference type="GeneID" id="830912"/>
<dbReference type="Gramene" id="AT5G10480.1">
    <molecule id="Q8VZB2-1"/>
    <property type="protein sequence ID" value="AT5G10480.1"/>
    <property type="gene ID" value="AT5G10480"/>
</dbReference>
<dbReference type="Gramene" id="AT5G10480.2">
    <molecule id="Q8VZB2-2"/>
    <property type="protein sequence ID" value="AT5G10480.2"/>
    <property type="gene ID" value="AT5G10480"/>
</dbReference>
<dbReference type="KEGG" id="ath:AT5G10480"/>
<dbReference type="Araport" id="AT5G10480"/>
<dbReference type="TAIR" id="AT5G10480">
    <property type="gene designation" value="PAS2"/>
</dbReference>
<dbReference type="eggNOG" id="KOG3187">
    <property type="taxonomic scope" value="Eukaryota"/>
</dbReference>
<dbReference type="InParanoid" id="Q8VZB2"/>
<dbReference type="PhylomeDB" id="Q8VZB2"/>
<dbReference type="BioCyc" id="ARA:AT5G10480-MONOMER"/>
<dbReference type="BioCyc" id="MetaCyc:AT5G10480-MONOMER"/>
<dbReference type="BRENDA" id="4.2.1.134">
    <property type="organism ID" value="399"/>
</dbReference>
<dbReference type="UniPathway" id="UPA00094"/>
<dbReference type="PRO" id="PR:Q8VZB2"/>
<dbReference type="Proteomes" id="UP000006548">
    <property type="component" value="Chromosome 5"/>
</dbReference>
<dbReference type="ExpressionAtlas" id="Q8VZB2">
    <property type="expression patterns" value="baseline and differential"/>
</dbReference>
<dbReference type="GO" id="GO:0005789">
    <property type="term" value="C:endoplasmic reticulum membrane"/>
    <property type="evidence" value="ECO:0007669"/>
    <property type="project" value="UniProtKB-SubCell"/>
</dbReference>
<dbReference type="GO" id="GO:0005634">
    <property type="term" value="C:nucleus"/>
    <property type="evidence" value="ECO:0007669"/>
    <property type="project" value="UniProtKB-SubCell"/>
</dbReference>
<dbReference type="GO" id="GO:0102158">
    <property type="term" value="F:very-long-chain (3R)-3-hydroxyacyl-CoA dehydratase activity"/>
    <property type="evidence" value="ECO:0007669"/>
    <property type="project" value="UniProtKB-EC"/>
</dbReference>
<dbReference type="GO" id="GO:0006633">
    <property type="term" value="P:fatty acid biosynthetic process"/>
    <property type="evidence" value="ECO:0007669"/>
    <property type="project" value="UniProtKB-UniPathway"/>
</dbReference>
<dbReference type="InterPro" id="IPR007482">
    <property type="entry name" value="Tyr_Pase-like_PTPLA"/>
</dbReference>
<dbReference type="PANTHER" id="PTHR11035">
    <property type="entry name" value="VERY-LONG-CHAIN (3R)-3-HYDROXYACYL-COA DEHYDRATASE"/>
    <property type="match status" value="1"/>
</dbReference>
<dbReference type="PANTHER" id="PTHR11035:SF3">
    <property type="entry name" value="VERY-LONG-CHAIN (3R)-3-HYDROXYACYL-COA DEHYDRATASE"/>
    <property type="match status" value="1"/>
</dbReference>
<dbReference type="Pfam" id="PF04387">
    <property type="entry name" value="PTPLA"/>
    <property type="match status" value="1"/>
</dbReference>
<protein>
    <recommendedName>
        <fullName evidence="9">Very-long-chain (3R)-3-hydroxyacyl-CoA dehydratase PASTICCINO 2</fullName>
        <ecNumber evidence="11">4.2.1.134</ecNumber>
    </recommendedName>
    <alternativeName>
        <fullName>3-hydroxyacyl-CoA dehydratase PASTICCINO 2</fullName>
        <shortName>AtPAS2</shortName>
        <shortName>HACD</shortName>
        <shortName>HCD</shortName>
    </alternativeName>
    <alternativeName>
        <fullName>Protein PEPINO</fullName>
        <shortName>PEP</shortName>
    </alternativeName>
    <alternativeName>
        <fullName>Protein tyrosine phosphatase-like protein</fullName>
    </alternativeName>
</protein>
<keyword id="KW-0025">Alternative splicing</keyword>
<keyword id="KW-0963">Cytoplasm</keyword>
<keyword id="KW-0217">Developmental protein</keyword>
<keyword id="KW-0256">Endoplasmic reticulum</keyword>
<keyword id="KW-0275">Fatty acid biosynthesis</keyword>
<keyword id="KW-0276">Fatty acid metabolism</keyword>
<keyword id="KW-0444">Lipid biosynthesis</keyword>
<keyword id="KW-0443">Lipid metabolism</keyword>
<keyword id="KW-0456">Lyase</keyword>
<keyword id="KW-0472">Membrane</keyword>
<keyword id="KW-0539">Nucleus</keyword>
<keyword id="KW-1185">Reference proteome</keyword>
<keyword id="KW-0812">Transmembrane</keyword>
<keyword id="KW-1133">Transmembrane helix</keyword>
<name>HACD_ARATH</name>
<evidence type="ECO:0000250" key="1">
    <source>
        <dbReference type="UniProtKB" id="P40857"/>
    </source>
</evidence>
<evidence type="ECO:0000255" key="2"/>
<evidence type="ECO:0000269" key="3">
    <source>
    </source>
</evidence>
<evidence type="ECO:0000269" key="4">
    <source>
    </source>
</evidence>
<evidence type="ECO:0000269" key="5">
    <source>
    </source>
</evidence>
<evidence type="ECO:0000269" key="6">
    <source>
    </source>
</evidence>
<evidence type="ECO:0000269" key="7">
    <source>
    </source>
</evidence>
<evidence type="ECO:0000269" key="8">
    <source>
    </source>
</evidence>
<evidence type="ECO:0000305" key="9"/>
<evidence type="ECO:0000305" key="10">
    <source>
    </source>
</evidence>
<evidence type="ECO:0000305" key="11">
    <source>
    </source>
</evidence>
<evidence type="ECO:0000305" key="12">
    <source>
    </source>
</evidence>
<evidence type="ECO:0000305" key="13">
    <source>
    </source>
</evidence>
<accession>Q8VZB2</accession>
<accession>A8MQH5</accession>
<accession>Q9LXA0</accession>
<reference key="1">
    <citation type="journal article" date="2002" name="Plant J.">
        <title>Pasticcino2 is a protein tyrosine phosphatase-like involved in cell proliferation and differentiation in Arabidopsis.</title>
        <authorList>
            <person name="Bellec Y."/>
            <person name="Harrar Y."/>
            <person name="Butaeye C."/>
            <person name="Darnet S."/>
            <person name="Bellini C."/>
            <person name="Faure J.-D."/>
        </authorList>
    </citation>
    <scope>NUCLEOTIDE SEQUENCE [MRNA] (ISOFORM 1)</scope>
    <scope>FUNCTION</scope>
    <scope>TISSUE SPECIFICITY</scope>
</reference>
<reference key="2">
    <citation type="journal article" date="2002" name="Dev. Genes Evol.">
        <title>The Arabidopsis gene PEPINO/PASTICCINO2 is required for proliferation control of meristematic and non-meristematic cells and encodes a putative anti-phosphatase.</title>
        <authorList>
            <person name="Haberer G."/>
            <person name="Erschadi S."/>
            <person name="Torres-Ruiz R.A."/>
        </authorList>
    </citation>
    <scope>NUCLEOTIDE SEQUENCE [MRNA] (ISOFORM 1)</scope>
    <scope>FUNCTION</scope>
    <scope>MUTAGENESIS OF SER-72</scope>
    <source>
        <tissue>Leaf</tissue>
        <tissue>Shoot</tissue>
    </source>
</reference>
<reference key="3">
    <citation type="journal article" date="2000" name="Nature">
        <title>Sequence and analysis of chromosome 5 of the plant Arabidopsis thaliana.</title>
        <authorList>
            <person name="Tabata S."/>
            <person name="Kaneko T."/>
            <person name="Nakamura Y."/>
            <person name="Kotani H."/>
            <person name="Kato T."/>
            <person name="Asamizu E."/>
            <person name="Miyajima N."/>
            <person name="Sasamoto S."/>
            <person name="Kimura T."/>
            <person name="Hosouchi T."/>
            <person name="Kawashima K."/>
            <person name="Kohara M."/>
            <person name="Matsumoto M."/>
            <person name="Matsuno A."/>
            <person name="Muraki A."/>
            <person name="Nakayama S."/>
            <person name="Nakazaki N."/>
            <person name="Naruo K."/>
            <person name="Okumura S."/>
            <person name="Shinpo S."/>
            <person name="Takeuchi C."/>
            <person name="Wada T."/>
            <person name="Watanabe A."/>
            <person name="Yamada M."/>
            <person name="Yasuda M."/>
            <person name="Sato S."/>
            <person name="de la Bastide M."/>
            <person name="Huang E."/>
            <person name="Spiegel L."/>
            <person name="Gnoj L."/>
            <person name="O'Shaughnessy A."/>
            <person name="Preston R."/>
            <person name="Habermann K."/>
            <person name="Murray J."/>
            <person name="Johnson D."/>
            <person name="Rohlfing T."/>
            <person name="Nelson J."/>
            <person name="Stoneking T."/>
            <person name="Pepin K."/>
            <person name="Spieth J."/>
            <person name="Sekhon M."/>
            <person name="Armstrong J."/>
            <person name="Becker M."/>
            <person name="Belter E."/>
            <person name="Cordum H."/>
            <person name="Cordes M."/>
            <person name="Courtney L."/>
            <person name="Courtney W."/>
            <person name="Dante M."/>
            <person name="Du H."/>
            <person name="Edwards J."/>
            <person name="Fryman J."/>
            <person name="Haakensen B."/>
            <person name="Lamar E."/>
            <person name="Latreille P."/>
            <person name="Leonard S."/>
            <person name="Meyer R."/>
            <person name="Mulvaney E."/>
            <person name="Ozersky P."/>
            <person name="Riley A."/>
            <person name="Strowmatt C."/>
            <person name="Wagner-McPherson C."/>
            <person name="Wollam A."/>
            <person name="Yoakum M."/>
            <person name="Bell M."/>
            <person name="Dedhia N."/>
            <person name="Parnell L."/>
            <person name="Shah R."/>
            <person name="Rodriguez M."/>
            <person name="Hoon See L."/>
            <person name="Vil D."/>
            <person name="Baker J."/>
            <person name="Kirchoff K."/>
            <person name="Toth K."/>
            <person name="King L."/>
            <person name="Bahret A."/>
            <person name="Miller B."/>
            <person name="Marra M.A."/>
            <person name="Martienssen R."/>
            <person name="McCombie W.R."/>
            <person name="Wilson R.K."/>
            <person name="Murphy G."/>
            <person name="Bancroft I."/>
            <person name="Volckaert G."/>
            <person name="Wambutt R."/>
            <person name="Duesterhoeft A."/>
            <person name="Stiekema W."/>
            <person name="Pohl T."/>
            <person name="Entian K.-D."/>
            <person name="Terryn N."/>
            <person name="Hartley N."/>
            <person name="Bent E."/>
            <person name="Johnson S."/>
            <person name="Langham S.-A."/>
            <person name="McCullagh B."/>
            <person name="Robben J."/>
            <person name="Grymonprez B."/>
            <person name="Zimmermann W."/>
            <person name="Ramsperger U."/>
            <person name="Wedler H."/>
            <person name="Balke K."/>
            <person name="Wedler E."/>
            <person name="Peters S."/>
            <person name="van Staveren M."/>
            <person name="Dirkse W."/>
            <person name="Mooijman P."/>
            <person name="Klein Lankhorst R."/>
            <person name="Weitzenegger T."/>
            <person name="Bothe G."/>
            <person name="Rose M."/>
            <person name="Hauf J."/>
            <person name="Berneiser S."/>
            <person name="Hempel S."/>
            <person name="Feldpausch M."/>
            <person name="Lamberth S."/>
            <person name="Villarroel R."/>
            <person name="Gielen J."/>
            <person name="Ardiles W."/>
            <person name="Bents O."/>
            <person name="Lemcke K."/>
            <person name="Kolesov G."/>
            <person name="Mayer K.F.X."/>
            <person name="Rudd S."/>
            <person name="Schoof H."/>
            <person name="Schueller C."/>
            <person name="Zaccaria P."/>
            <person name="Mewes H.-W."/>
            <person name="Bevan M."/>
            <person name="Fransz P.F."/>
        </authorList>
    </citation>
    <scope>NUCLEOTIDE SEQUENCE [LARGE SCALE GENOMIC DNA]</scope>
    <source>
        <strain>cv. Columbia</strain>
    </source>
</reference>
<reference key="4">
    <citation type="journal article" date="2017" name="Plant J.">
        <title>Araport11: a complete reannotation of the Arabidopsis thaliana reference genome.</title>
        <authorList>
            <person name="Cheng C.Y."/>
            <person name="Krishnakumar V."/>
            <person name="Chan A.P."/>
            <person name="Thibaud-Nissen F."/>
            <person name="Schobel S."/>
            <person name="Town C.D."/>
        </authorList>
    </citation>
    <scope>GENOME REANNOTATION</scope>
    <source>
        <strain>cv. Columbia</strain>
    </source>
</reference>
<reference key="5">
    <citation type="journal article" date="2003" name="Science">
        <title>Empirical analysis of transcriptional activity in the Arabidopsis genome.</title>
        <authorList>
            <person name="Yamada K."/>
            <person name="Lim J."/>
            <person name="Dale J.M."/>
            <person name="Chen H."/>
            <person name="Shinn P."/>
            <person name="Palm C.J."/>
            <person name="Southwick A.M."/>
            <person name="Wu H.C."/>
            <person name="Kim C.J."/>
            <person name="Nguyen M."/>
            <person name="Pham P.K."/>
            <person name="Cheuk R.F."/>
            <person name="Karlin-Newmann G."/>
            <person name="Liu S.X."/>
            <person name="Lam B."/>
            <person name="Sakano H."/>
            <person name="Wu T."/>
            <person name="Yu G."/>
            <person name="Miranda M."/>
            <person name="Quach H.L."/>
            <person name="Tripp M."/>
            <person name="Chang C.H."/>
            <person name="Lee J.M."/>
            <person name="Toriumi M.J."/>
            <person name="Chan M.M."/>
            <person name="Tang C.C."/>
            <person name="Onodera C.S."/>
            <person name="Deng J.M."/>
            <person name="Akiyama K."/>
            <person name="Ansari Y."/>
            <person name="Arakawa T."/>
            <person name="Banh J."/>
            <person name="Banno F."/>
            <person name="Bowser L."/>
            <person name="Brooks S.Y."/>
            <person name="Carninci P."/>
            <person name="Chao Q."/>
            <person name="Choy N."/>
            <person name="Enju A."/>
            <person name="Goldsmith A.D."/>
            <person name="Gurjal M."/>
            <person name="Hansen N.F."/>
            <person name="Hayashizaki Y."/>
            <person name="Johnson-Hopson C."/>
            <person name="Hsuan V.W."/>
            <person name="Iida K."/>
            <person name="Karnes M."/>
            <person name="Khan S."/>
            <person name="Koesema E."/>
            <person name="Ishida J."/>
            <person name="Jiang P.X."/>
            <person name="Jones T."/>
            <person name="Kawai J."/>
            <person name="Kamiya A."/>
            <person name="Meyers C."/>
            <person name="Nakajima M."/>
            <person name="Narusaka M."/>
            <person name="Seki M."/>
            <person name="Sakurai T."/>
            <person name="Satou M."/>
            <person name="Tamse R."/>
            <person name="Vaysberg M."/>
            <person name="Wallender E.K."/>
            <person name="Wong C."/>
            <person name="Yamamura Y."/>
            <person name="Yuan S."/>
            <person name="Shinozaki K."/>
            <person name="Davis R.W."/>
            <person name="Theologis A."/>
            <person name="Ecker J.R."/>
        </authorList>
    </citation>
    <scope>NUCLEOTIDE SEQUENCE [LARGE SCALE MRNA] (ISOFORM 1)</scope>
    <source>
        <strain>cv. Columbia</strain>
    </source>
</reference>
<reference key="6">
    <citation type="journal article" date="2003" name="Plant Physiol.">
        <title>Hormonal control of cell proliferation requires PASTICCINO genes.</title>
        <authorList>
            <person name="Harrar Y."/>
            <person name="Bellec Y."/>
            <person name="Bellini C."/>
            <person name="Faure J.-D."/>
        </authorList>
    </citation>
    <scope>FUNCTION</scope>
</reference>
<reference key="7">
    <citation type="journal article" date="2006" name="Plant Cell">
        <title>Arabidopsis PASTICCINO2 is an antiphosphatase involved in regulation of cyclin-dependent kinase A.</title>
        <authorList>
            <person name="Da Costa M."/>
            <person name="Bach L."/>
            <person name="Landrieu I."/>
            <person name="Bellec Y."/>
            <person name="Catrice O."/>
            <person name="Brown S."/>
            <person name="De Veylder L."/>
            <person name="Lippens G."/>
            <person name="Inze D."/>
            <person name="Faure J.-D."/>
        </authorList>
    </citation>
    <scope>FUNCTION</scope>
    <scope>INTERACTION WITH CDKA-1</scope>
    <scope>SUBCELLULAR LOCATION</scope>
</reference>
<reference key="8">
    <citation type="journal article" date="2008" name="Proc. Natl. Acad. Sci. U.S.A.">
        <title>The very-long-chain hydroxy fatty acyl-CoA dehydratase PASTICCINO2 is essential and limiting for plant development.</title>
        <authorList>
            <person name="Bach L."/>
            <person name="Michaelson L.V."/>
            <person name="Haslam R."/>
            <person name="Bellec Y."/>
            <person name="Gissot L."/>
            <person name="Marion J."/>
            <person name="Da Costa M."/>
            <person name="Boutin J.P."/>
            <person name="Miquel M."/>
            <person name="Tellier F."/>
            <person name="Domergue F."/>
            <person name="Markham J.E."/>
            <person name="Beaudoin F."/>
            <person name="Napier J.A."/>
            <person name="Faure J.D."/>
        </authorList>
    </citation>
    <scope>FUNCTION</scope>
    <scope>CATALYTIC ACTIVITY</scope>
    <scope>PATHWAY</scope>
    <scope>SUBCELLULAR LOCATION</scope>
    <scope>DISRUPTION PHENOTYPE</scope>
</reference>
<reference key="9">
    <citation type="journal article" date="2010" name="Plant Cell">
        <title>Very-long-chain fatty acids are involved in polar auxin transport and developmental patterning in Arabidopsis.</title>
        <authorList>
            <person name="Roudier F."/>
            <person name="Gissot L."/>
            <person name="Beaudoin F."/>
            <person name="Haslam R."/>
            <person name="Michaelson L."/>
            <person name="Marion J."/>
            <person name="Molino D."/>
            <person name="Lima A."/>
            <person name="Bach L."/>
            <person name="Morin H."/>
            <person name="Tellier F."/>
            <person name="Palauqui J.C."/>
            <person name="Bellec Y."/>
            <person name="Renne C."/>
            <person name="Miquel M."/>
            <person name="Dacosta M."/>
            <person name="Vignard J."/>
            <person name="Rochat C."/>
            <person name="Markham J.E."/>
            <person name="Moreau P."/>
            <person name="Napier J."/>
            <person name="Faure J.D."/>
        </authorList>
    </citation>
    <scope>INTERACTION WITH PAS1</scope>
</reference>
<reference key="10">
    <citation type="journal article" date="2011" name="J. Cell Sci.">
        <title>Very-long-chain fatty acids are required for cell plate formation during cytokinesis in Arabidopsis thaliana.</title>
        <authorList>
            <person name="Bach L."/>
            <person name="Gissot L."/>
            <person name="Marion J."/>
            <person name="Tellier F."/>
            <person name="Moreau P."/>
            <person name="Satiat-Jeunemaitre B."/>
            <person name="Palauqui J.C."/>
            <person name="Napier J.A."/>
            <person name="Faure J.D."/>
        </authorList>
    </citation>
    <scope>FUNCTION</scope>
    <scope>TISSUE SPECIFICITY</scope>
    <scope>DISRUPTION PHENOTYPE</scope>
</reference>
<proteinExistence type="evidence at protein level"/>
<comment type="function">
    <text evidence="3 4 5 6 7 8">Catalyzes the third of the four reactions of the long-chain fatty acids elongation cycle. This endoplasmic reticulum-bound enzymatic process, allows the addition of two carbons to the chain of long- and very long-chain fatty acids/VLCFAs per cycle. This enzyme catalyzes the dehydration of the 3-hydroxyacyl-CoA intermediate into trans-2,3-enoyl-CoA, within each cycle of fatty acid elongation. Thereby, it participates in the production of VLCFAs of different chain lengths that are involved in multiple biological processes as precursors of membrane lipids and lipid mediators. May be an anti-phosphatase that prevents CDKA-1 dephosphorylation and activation. Involved in the hormonal control of cell division and differentiation. Required for proliferation control of meristematic and non-meristematic cells. Negative regulator of the cell cycle.</text>
</comment>
<comment type="catalytic activity">
    <reaction evidence="11">
        <text>a very-long-chain (3R)-3-hydroxyacyl-CoA = a very-long-chain (2E)-enoyl-CoA + H2O</text>
        <dbReference type="Rhea" id="RHEA:45812"/>
        <dbReference type="ChEBI" id="CHEBI:15377"/>
        <dbReference type="ChEBI" id="CHEBI:83728"/>
        <dbReference type="ChEBI" id="CHEBI:85440"/>
        <dbReference type="EC" id="4.2.1.134"/>
    </reaction>
</comment>
<comment type="pathway">
    <text evidence="11">Lipid metabolism; fatty acid biosynthesis.</text>
</comment>
<comment type="subunit">
    <text evidence="10 12">Interacts with CDKA-1; but only with the 'Tyr-15' phosphorylated protein. Interacts with PAS1. Part of the fatty acid elongase complex which contains a beta-ketoacyl-CoA synthase (KCS), a beta-ketoacyl-CoA reductase (KCR), a beta-hydroxyacyl-CoA dehydratase (HCD) and an enoyl-CoA reductase (ECR) (Probable).</text>
</comment>
<comment type="subcellular location">
    <subcellularLocation>
        <location evidence="7">Endoplasmic reticulum membrane</location>
        <topology evidence="2">Multi-pass membrane protein</topology>
    </subcellularLocation>
    <subcellularLocation>
        <location evidence="6">Cytoplasm</location>
    </subcellularLocation>
    <subcellularLocation>
        <location evidence="6">Nucleus</location>
    </subcellularLocation>
    <text evidence="6">Found in the cytoplasm of dividing cells but moves into the nucleus upon cell differentiation.</text>
</comment>
<comment type="alternative products">
    <event type="alternative splicing"/>
    <isoform>
        <id>Q8VZB2-1</id>
        <name>1</name>
        <sequence type="displayed"/>
    </isoform>
    <isoform>
        <id>Q8VZB2-2</id>
        <name>2</name>
        <sequence type="described" ref="VSP_037155 VSP_037156"/>
    </isoform>
</comment>
<comment type="tissue specificity">
    <text evidence="4 8">High expression in young seedlings, roots, root tips, flowers and young siliques. Lower levels in leaves and stems.</text>
</comment>
<comment type="disruption phenotype">
    <text evidence="7 8">Embryo lethal when homozygote.</text>
</comment>
<comment type="miscellaneous">
    <text evidence="13">Plants with reduced expression of PAS2 show impaired embryo and seedling development associated with cell de-differentiation and proliferation. Root growth is reduced, due to a delay in cell plate establishment during cytokinesis (PubMed:21896643).</text>
</comment>
<comment type="similarity">
    <text evidence="9">Belongs to the very long-chain fatty acids dehydratase HACD family.</text>
</comment>
<comment type="caution">
    <text evidence="9">Shares some similarity with tyrosine phosphatase proteins but it has probably no phosphatase activity since the potential active site Cys residue in position 65 is replaced by Gly.</text>
</comment>
<comment type="sequence caution" evidence="9">
    <conflict type="erroneous gene model prediction">
        <sequence resource="EMBL-CDS" id="CAB89395"/>
    </conflict>
</comment>
<sequence>MAGFLSVVRRVYLTLYNWIVFAGWAQVLYLAITTLKETGYENVYDAIEKPLQLAQTAAVLEILHGLVGLVRSPVSATLPQIGSRLFLTWGILYSFPEVRSHFLVTSLVISWSITEIIRYSFFGFKEALGFAPSWHLWLRYSSFLLLYPTGITSEVGLIYLALPHIKTSEMYSVRMPNILNFSFDFFYATILVLAIYVPGSPHMYRYMLGQRKRALSKSKRE</sequence>
<organism>
    <name type="scientific">Arabidopsis thaliana</name>
    <name type="common">Mouse-ear cress</name>
    <dbReference type="NCBI Taxonomy" id="3702"/>
    <lineage>
        <taxon>Eukaryota</taxon>
        <taxon>Viridiplantae</taxon>
        <taxon>Streptophyta</taxon>
        <taxon>Embryophyta</taxon>
        <taxon>Tracheophyta</taxon>
        <taxon>Spermatophyta</taxon>
        <taxon>Magnoliopsida</taxon>
        <taxon>eudicotyledons</taxon>
        <taxon>Gunneridae</taxon>
        <taxon>Pentapetalae</taxon>
        <taxon>rosids</taxon>
        <taxon>malvids</taxon>
        <taxon>Brassicales</taxon>
        <taxon>Brassicaceae</taxon>
        <taxon>Camelineae</taxon>
        <taxon>Arabidopsis</taxon>
    </lineage>
</organism>